<protein>
    <recommendedName>
        <fullName evidence="1">Phosphoglucosamine mutase</fullName>
        <ecNumber evidence="1">5.4.2.10</ecNumber>
    </recommendedName>
</protein>
<accession>Q7TWH9</accession>
<accession>A0A1R3Y4A2</accession>
<accession>X2BNC0</accession>
<evidence type="ECO:0000255" key="1">
    <source>
        <dbReference type="HAMAP-Rule" id="MF_01554"/>
    </source>
</evidence>
<gene>
    <name evidence="1" type="primary">glmM</name>
    <name type="ordered locus">BQ2027_MB3471C</name>
</gene>
<comment type="function">
    <text evidence="1">Catalyzes the conversion of glucosamine-6-phosphate to glucosamine-1-phosphate.</text>
</comment>
<comment type="catalytic activity">
    <reaction evidence="1">
        <text>alpha-D-glucosamine 1-phosphate = D-glucosamine 6-phosphate</text>
        <dbReference type="Rhea" id="RHEA:23424"/>
        <dbReference type="ChEBI" id="CHEBI:58516"/>
        <dbReference type="ChEBI" id="CHEBI:58725"/>
        <dbReference type="EC" id="5.4.2.10"/>
    </reaction>
</comment>
<comment type="cofactor">
    <cofactor evidence="1">
        <name>Mg(2+)</name>
        <dbReference type="ChEBI" id="CHEBI:18420"/>
    </cofactor>
    <text evidence="1">Binds 1 Mg(2+) ion per subunit.</text>
</comment>
<comment type="PTM">
    <text evidence="1">Activated by phosphorylation.</text>
</comment>
<comment type="similarity">
    <text evidence="1">Belongs to the phosphohexose mutase family.</text>
</comment>
<proteinExistence type="inferred from homology"/>
<sequence>MGRLFGTDGVRGVANRELTAELALALGAAAARRLSRSGAPGRRVAVLGRDPRASGEMLEAAVIAGLTSEGVDALRVGVLPTPAVAYLTGAYDADFGVMISASHNPMPDNGIKIFGPGGHKLDDDTEDQIEDLVLGVSRGPGLRPAGAGIGRVIDAEDATERYLRHVAKAATARLDDLAVVVDCAHGAASSAAPRAYRAAGARVIAINAEPNGRNINDGCGSTHLDPLRAAVLAHRADLGLAHDGDADRCLAVDANGDLVDGDAIMVVLALAMKEAGELACNTLVATVMSNLGLHLAMRSAGVTVRTTAVGDRYVLEELRAGDYSLGGEQSGHIVMPALGSTGDGIVTGLRLMTRMVQTGSSLSDLASAMRTLPQVLINVEVVDKATAAAAPSVRTAVEQAAAELGDTGRILLRPSGTEPMIRVMVEAADEGVAQRLAATVADAVSTAR</sequence>
<keyword id="KW-0413">Isomerase</keyword>
<keyword id="KW-0460">Magnesium</keyword>
<keyword id="KW-0479">Metal-binding</keyword>
<keyword id="KW-0597">Phosphoprotein</keyword>
<keyword id="KW-1185">Reference proteome</keyword>
<reference key="1">
    <citation type="journal article" date="2003" name="Proc. Natl. Acad. Sci. U.S.A.">
        <title>The complete genome sequence of Mycobacterium bovis.</title>
        <authorList>
            <person name="Garnier T."/>
            <person name="Eiglmeier K."/>
            <person name="Camus J.-C."/>
            <person name="Medina N."/>
            <person name="Mansoor H."/>
            <person name="Pryor M."/>
            <person name="Duthoy S."/>
            <person name="Grondin S."/>
            <person name="Lacroix C."/>
            <person name="Monsempe C."/>
            <person name="Simon S."/>
            <person name="Harris B."/>
            <person name="Atkin R."/>
            <person name="Doggett J."/>
            <person name="Mayes R."/>
            <person name="Keating L."/>
            <person name="Wheeler P.R."/>
            <person name="Parkhill J."/>
            <person name="Barrell B.G."/>
            <person name="Cole S.T."/>
            <person name="Gordon S.V."/>
            <person name="Hewinson R.G."/>
        </authorList>
    </citation>
    <scope>NUCLEOTIDE SEQUENCE [LARGE SCALE GENOMIC DNA]</scope>
    <source>
        <strain>ATCC BAA-935 / AF2122/97</strain>
    </source>
</reference>
<reference key="2">
    <citation type="journal article" date="2017" name="Genome Announc.">
        <title>Updated reference genome sequence and annotation of Mycobacterium bovis AF2122/97.</title>
        <authorList>
            <person name="Malone K.M."/>
            <person name="Farrell D."/>
            <person name="Stuber T.P."/>
            <person name="Schubert O.T."/>
            <person name="Aebersold R."/>
            <person name="Robbe-Austerman S."/>
            <person name="Gordon S.V."/>
        </authorList>
    </citation>
    <scope>NUCLEOTIDE SEQUENCE [LARGE SCALE GENOMIC DNA]</scope>
    <scope>GENOME REANNOTATION</scope>
    <source>
        <strain>ATCC BAA-935 / AF2122/97</strain>
    </source>
</reference>
<name>GLMM_MYCBO</name>
<organism>
    <name type="scientific">Mycobacterium bovis (strain ATCC BAA-935 / AF2122/97)</name>
    <dbReference type="NCBI Taxonomy" id="233413"/>
    <lineage>
        <taxon>Bacteria</taxon>
        <taxon>Bacillati</taxon>
        <taxon>Actinomycetota</taxon>
        <taxon>Actinomycetes</taxon>
        <taxon>Mycobacteriales</taxon>
        <taxon>Mycobacteriaceae</taxon>
        <taxon>Mycobacterium</taxon>
        <taxon>Mycobacterium tuberculosis complex</taxon>
    </lineage>
</organism>
<dbReference type="EC" id="5.4.2.10" evidence="1"/>
<dbReference type="EMBL" id="LT708304">
    <property type="protein sequence ID" value="SIU02099.1"/>
    <property type="molecule type" value="Genomic_DNA"/>
</dbReference>
<dbReference type="RefSeq" id="NP_857111.1">
    <property type="nucleotide sequence ID" value="NC_002945.3"/>
</dbReference>
<dbReference type="RefSeq" id="WP_003418304.1">
    <property type="nucleotide sequence ID" value="NC_002945.4"/>
</dbReference>
<dbReference type="SMR" id="Q7TWH9"/>
<dbReference type="KEGG" id="mbo:BQ2027_MB3471C"/>
<dbReference type="PATRIC" id="fig|233413.5.peg.3808"/>
<dbReference type="Proteomes" id="UP000001419">
    <property type="component" value="Chromosome"/>
</dbReference>
<dbReference type="GO" id="GO:0005829">
    <property type="term" value="C:cytosol"/>
    <property type="evidence" value="ECO:0007669"/>
    <property type="project" value="TreeGrafter"/>
</dbReference>
<dbReference type="GO" id="GO:0000287">
    <property type="term" value="F:magnesium ion binding"/>
    <property type="evidence" value="ECO:0007669"/>
    <property type="project" value="UniProtKB-UniRule"/>
</dbReference>
<dbReference type="GO" id="GO:0008966">
    <property type="term" value="F:phosphoglucosamine mutase activity"/>
    <property type="evidence" value="ECO:0007669"/>
    <property type="project" value="UniProtKB-UniRule"/>
</dbReference>
<dbReference type="GO" id="GO:0004615">
    <property type="term" value="F:phosphomannomutase activity"/>
    <property type="evidence" value="ECO:0007669"/>
    <property type="project" value="TreeGrafter"/>
</dbReference>
<dbReference type="GO" id="GO:0005975">
    <property type="term" value="P:carbohydrate metabolic process"/>
    <property type="evidence" value="ECO:0007669"/>
    <property type="project" value="InterPro"/>
</dbReference>
<dbReference type="GO" id="GO:0009252">
    <property type="term" value="P:peptidoglycan biosynthetic process"/>
    <property type="evidence" value="ECO:0007669"/>
    <property type="project" value="TreeGrafter"/>
</dbReference>
<dbReference type="GO" id="GO:0006048">
    <property type="term" value="P:UDP-N-acetylglucosamine biosynthetic process"/>
    <property type="evidence" value="ECO:0007669"/>
    <property type="project" value="TreeGrafter"/>
</dbReference>
<dbReference type="CDD" id="cd05802">
    <property type="entry name" value="GlmM"/>
    <property type="match status" value="1"/>
</dbReference>
<dbReference type="FunFam" id="3.30.310.50:FF:000001">
    <property type="entry name" value="Phosphoglucosamine mutase"/>
    <property type="match status" value="1"/>
</dbReference>
<dbReference type="FunFam" id="3.40.120.10:FF:000001">
    <property type="entry name" value="Phosphoglucosamine mutase"/>
    <property type="match status" value="1"/>
</dbReference>
<dbReference type="FunFam" id="3.40.120.10:FF:000002">
    <property type="entry name" value="Phosphoglucosamine mutase"/>
    <property type="match status" value="1"/>
</dbReference>
<dbReference type="Gene3D" id="3.40.120.10">
    <property type="entry name" value="Alpha-D-Glucose-1,6-Bisphosphate, subunit A, domain 3"/>
    <property type="match status" value="3"/>
</dbReference>
<dbReference type="Gene3D" id="3.30.310.50">
    <property type="entry name" value="Alpha-D-phosphohexomutase, C-terminal domain"/>
    <property type="match status" value="1"/>
</dbReference>
<dbReference type="HAMAP" id="MF_01554_B">
    <property type="entry name" value="GlmM_B"/>
    <property type="match status" value="1"/>
</dbReference>
<dbReference type="InterPro" id="IPR005844">
    <property type="entry name" value="A-D-PHexomutase_a/b/a-I"/>
</dbReference>
<dbReference type="InterPro" id="IPR016055">
    <property type="entry name" value="A-D-PHexomutase_a/b/a-I/II/III"/>
</dbReference>
<dbReference type="InterPro" id="IPR005845">
    <property type="entry name" value="A-D-PHexomutase_a/b/a-II"/>
</dbReference>
<dbReference type="InterPro" id="IPR005846">
    <property type="entry name" value="A-D-PHexomutase_a/b/a-III"/>
</dbReference>
<dbReference type="InterPro" id="IPR005843">
    <property type="entry name" value="A-D-PHexomutase_C"/>
</dbReference>
<dbReference type="InterPro" id="IPR036900">
    <property type="entry name" value="A-D-PHexomutase_C_sf"/>
</dbReference>
<dbReference type="InterPro" id="IPR016066">
    <property type="entry name" value="A-D-PHexomutase_CS"/>
</dbReference>
<dbReference type="InterPro" id="IPR005841">
    <property type="entry name" value="Alpha-D-phosphohexomutase_SF"/>
</dbReference>
<dbReference type="InterPro" id="IPR006352">
    <property type="entry name" value="GlmM_bact"/>
</dbReference>
<dbReference type="InterPro" id="IPR050060">
    <property type="entry name" value="Phosphoglucosamine_mutase"/>
</dbReference>
<dbReference type="NCBIfam" id="TIGR01455">
    <property type="entry name" value="glmM"/>
    <property type="match status" value="1"/>
</dbReference>
<dbReference type="PANTHER" id="PTHR42946:SF1">
    <property type="entry name" value="PHOSPHOGLUCOMUTASE (ALPHA-D-GLUCOSE-1,6-BISPHOSPHATE-DEPENDENT)"/>
    <property type="match status" value="1"/>
</dbReference>
<dbReference type="PANTHER" id="PTHR42946">
    <property type="entry name" value="PHOSPHOHEXOSE MUTASE"/>
    <property type="match status" value="1"/>
</dbReference>
<dbReference type="Pfam" id="PF02878">
    <property type="entry name" value="PGM_PMM_I"/>
    <property type="match status" value="1"/>
</dbReference>
<dbReference type="Pfam" id="PF02879">
    <property type="entry name" value="PGM_PMM_II"/>
    <property type="match status" value="1"/>
</dbReference>
<dbReference type="Pfam" id="PF02880">
    <property type="entry name" value="PGM_PMM_III"/>
    <property type="match status" value="1"/>
</dbReference>
<dbReference type="Pfam" id="PF00408">
    <property type="entry name" value="PGM_PMM_IV"/>
    <property type="match status" value="1"/>
</dbReference>
<dbReference type="PRINTS" id="PR00509">
    <property type="entry name" value="PGMPMM"/>
</dbReference>
<dbReference type="SUPFAM" id="SSF55957">
    <property type="entry name" value="Phosphoglucomutase, C-terminal domain"/>
    <property type="match status" value="1"/>
</dbReference>
<dbReference type="SUPFAM" id="SSF53738">
    <property type="entry name" value="Phosphoglucomutase, first 3 domains"/>
    <property type="match status" value="3"/>
</dbReference>
<dbReference type="PROSITE" id="PS00710">
    <property type="entry name" value="PGM_PMM"/>
    <property type="match status" value="1"/>
</dbReference>
<feature type="chain" id="PRO_0000147915" description="Phosphoglucosamine mutase">
    <location>
        <begin position="1"/>
        <end position="448"/>
    </location>
</feature>
<feature type="active site" description="Phosphoserine intermediate" evidence="1">
    <location>
        <position position="102"/>
    </location>
</feature>
<feature type="binding site" description="via phosphate group" evidence="1">
    <location>
        <position position="102"/>
    </location>
    <ligand>
        <name>Mg(2+)</name>
        <dbReference type="ChEBI" id="CHEBI:18420"/>
    </ligand>
</feature>
<feature type="binding site" evidence="1">
    <location>
        <position position="243"/>
    </location>
    <ligand>
        <name>Mg(2+)</name>
        <dbReference type="ChEBI" id="CHEBI:18420"/>
    </ligand>
</feature>
<feature type="binding site" evidence="1">
    <location>
        <position position="245"/>
    </location>
    <ligand>
        <name>Mg(2+)</name>
        <dbReference type="ChEBI" id="CHEBI:18420"/>
    </ligand>
</feature>
<feature type="binding site" evidence="1">
    <location>
        <position position="247"/>
    </location>
    <ligand>
        <name>Mg(2+)</name>
        <dbReference type="ChEBI" id="CHEBI:18420"/>
    </ligand>
</feature>
<feature type="modified residue" description="Phosphoserine" evidence="1">
    <location>
        <position position="102"/>
    </location>
</feature>